<feature type="chain" id="PRO_1000098008" description="ATP-dependent Clp protease ATP-binding subunit ClpX">
    <location>
        <begin position="1"/>
        <end position="410"/>
    </location>
</feature>
<feature type="domain" description="ClpX-type ZB" evidence="2">
    <location>
        <begin position="1"/>
        <end position="54"/>
    </location>
</feature>
<feature type="binding site" evidence="2">
    <location>
        <position position="13"/>
    </location>
    <ligand>
        <name>Zn(2+)</name>
        <dbReference type="ChEBI" id="CHEBI:29105"/>
    </ligand>
</feature>
<feature type="binding site" evidence="2">
    <location>
        <position position="16"/>
    </location>
    <ligand>
        <name>Zn(2+)</name>
        <dbReference type="ChEBI" id="CHEBI:29105"/>
    </ligand>
</feature>
<feature type="binding site" evidence="2">
    <location>
        <position position="35"/>
    </location>
    <ligand>
        <name>Zn(2+)</name>
        <dbReference type="ChEBI" id="CHEBI:29105"/>
    </ligand>
</feature>
<feature type="binding site" evidence="2">
    <location>
        <position position="38"/>
    </location>
    <ligand>
        <name>Zn(2+)</name>
        <dbReference type="ChEBI" id="CHEBI:29105"/>
    </ligand>
</feature>
<feature type="binding site" evidence="1">
    <location>
        <begin position="120"/>
        <end position="127"/>
    </location>
    <ligand>
        <name>ATP</name>
        <dbReference type="ChEBI" id="CHEBI:30616"/>
    </ligand>
</feature>
<name>CLPX_STRPS</name>
<comment type="function">
    <text evidence="1">ATP-dependent specificity component of the Clp protease. It directs the protease to specific substrates. Can perform chaperone functions in the absence of ClpP.</text>
</comment>
<comment type="subunit">
    <text evidence="1">Component of the ClpX-ClpP complex. Forms a hexameric ring that, in the presence of ATP, binds to fourteen ClpP subunits assembled into a disk-like structure with a central cavity, resembling the structure of eukaryotic proteasomes.</text>
</comment>
<comment type="similarity">
    <text evidence="1">Belongs to the ClpX chaperone family.</text>
</comment>
<accession>B2IR87</accession>
<evidence type="ECO:0000255" key="1">
    <source>
        <dbReference type="HAMAP-Rule" id="MF_00175"/>
    </source>
</evidence>
<evidence type="ECO:0000255" key="2">
    <source>
        <dbReference type="PROSITE-ProRule" id="PRU01250"/>
    </source>
</evidence>
<gene>
    <name evidence="1" type="primary">clpX</name>
    <name type="ordered locus">SPCG_1554</name>
</gene>
<protein>
    <recommendedName>
        <fullName evidence="1">ATP-dependent Clp protease ATP-binding subunit ClpX</fullName>
    </recommendedName>
</protein>
<reference key="1">
    <citation type="journal article" date="2009" name="BMC Genomics">
        <title>Genome evolution driven by host adaptations results in a more virulent and antimicrobial-resistant Streptococcus pneumoniae serotype 14.</title>
        <authorList>
            <person name="Ding F."/>
            <person name="Tang P."/>
            <person name="Hsu M.-H."/>
            <person name="Cui P."/>
            <person name="Hu S."/>
            <person name="Yu J."/>
            <person name="Chiu C.-H."/>
        </authorList>
    </citation>
    <scope>NUCLEOTIDE SEQUENCE [LARGE SCALE GENOMIC DNA]</scope>
    <source>
        <strain>CGSP14</strain>
    </source>
</reference>
<dbReference type="EMBL" id="CP001033">
    <property type="protein sequence ID" value="ACB90806.1"/>
    <property type="molecule type" value="Genomic_DNA"/>
</dbReference>
<dbReference type="RefSeq" id="WP_000106354.1">
    <property type="nucleotide sequence ID" value="NC_010582.1"/>
</dbReference>
<dbReference type="SMR" id="B2IR87"/>
<dbReference type="KEGG" id="spw:SPCG_1554"/>
<dbReference type="HOGENOM" id="CLU_014218_8_2_9"/>
<dbReference type="GO" id="GO:0009376">
    <property type="term" value="C:HslUV protease complex"/>
    <property type="evidence" value="ECO:0007669"/>
    <property type="project" value="TreeGrafter"/>
</dbReference>
<dbReference type="GO" id="GO:0005524">
    <property type="term" value="F:ATP binding"/>
    <property type="evidence" value="ECO:0007669"/>
    <property type="project" value="UniProtKB-UniRule"/>
</dbReference>
<dbReference type="GO" id="GO:0016887">
    <property type="term" value="F:ATP hydrolysis activity"/>
    <property type="evidence" value="ECO:0007669"/>
    <property type="project" value="InterPro"/>
</dbReference>
<dbReference type="GO" id="GO:0140662">
    <property type="term" value="F:ATP-dependent protein folding chaperone"/>
    <property type="evidence" value="ECO:0007669"/>
    <property type="project" value="InterPro"/>
</dbReference>
<dbReference type="GO" id="GO:0046983">
    <property type="term" value="F:protein dimerization activity"/>
    <property type="evidence" value="ECO:0007669"/>
    <property type="project" value="InterPro"/>
</dbReference>
<dbReference type="GO" id="GO:0051082">
    <property type="term" value="F:unfolded protein binding"/>
    <property type="evidence" value="ECO:0007669"/>
    <property type="project" value="UniProtKB-UniRule"/>
</dbReference>
<dbReference type="GO" id="GO:0008270">
    <property type="term" value="F:zinc ion binding"/>
    <property type="evidence" value="ECO:0007669"/>
    <property type="project" value="InterPro"/>
</dbReference>
<dbReference type="GO" id="GO:0051301">
    <property type="term" value="P:cell division"/>
    <property type="evidence" value="ECO:0007669"/>
    <property type="project" value="TreeGrafter"/>
</dbReference>
<dbReference type="GO" id="GO:0051603">
    <property type="term" value="P:proteolysis involved in protein catabolic process"/>
    <property type="evidence" value="ECO:0007669"/>
    <property type="project" value="TreeGrafter"/>
</dbReference>
<dbReference type="CDD" id="cd19497">
    <property type="entry name" value="RecA-like_ClpX"/>
    <property type="match status" value="1"/>
</dbReference>
<dbReference type="FunFam" id="1.10.8.60:FF:000002">
    <property type="entry name" value="ATP-dependent Clp protease ATP-binding subunit ClpX"/>
    <property type="match status" value="1"/>
</dbReference>
<dbReference type="FunFam" id="3.40.50.300:FF:000005">
    <property type="entry name" value="ATP-dependent Clp protease ATP-binding subunit ClpX"/>
    <property type="match status" value="1"/>
</dbReference>
<dbReference type="Gene3D" id="1.10.8.60">
    <property type="match status" value="1"/>
</dbReference>
<dbReference type="Gene3D" id="6.20.220.10">
    <property type="entry name" value="ClpX chaperone, C4-type zinc finger domain"/>
    <property type="match status" value="1"/>
</dbReference>
<dbReference type="Gene3D" id="3.40.50.300">
    <property type="entry name" value="P-loop containing nucleotide triphosphate hydrolases"/>
    <property type="match status" value="1"/>
</dbReference>
<dbReference type="HAMAP" id="MF_00175">
    <property type="entry name" value="ClpX"/>
    <property type="match status" value="1"/>
</dbReference>
<dbReference type="InterPro" id="IPR003593">
    <property type="entry name" value="AAA+_ATPase"/>
</dbReference>
<dbReference type="InterPro" id="IPR050052">
    <property type="entry name" value="ATP-dep_Clp_protease_ClpX"/>
</dbReference>
<dbReference type="InterPro" id="IPR003959">
    <property type="entry name" value="ATPase_AAA_core"/>
</dbReference>
<dbReference type="InterPro" id="IPR019489">
    <property type="entry name" value="Clp_ATPase_C"/>
</dbReference>
<dbReference type="InterPro" id="IPR004487">
    <property type="entry name" value="Clp_protease_ATP-bd_su_ClpX"/>
</dbReference>
<dbReference type="InterPro" id="IPR046425">
    <property type="entry name" value="ClpX_bact"/>
</dbReference>
<dbReference type="InterPro" id="IPR027417">
    <property type="entry name" value="P-loop_NTPase"/>
</dbReference>
<dbReference type="InterPro" id="IPR010603">
    <property type="entry name" value="Znf_CppX_C4"/>
</dbReference>
<dbReference type="InterPro" id="IPR038366">
    <property type="entry name" value="Znf_CppX_C4_sf"/>
</dbReference>
<dbReference type="NCBIfam" id="TIGR00382">
    <property type="entry name" value="clpX"/>
    <property type="match status" value="1"/>
</dbReference>
<dbReference type="NCBIfam" id="NF003745">
    <property type="entry name" value="PRK05342.1"/>
    <property type="match status" value="1"/>
</dbReference>
<dbReference type="PANTHER" id="PTHR48102:SF7">
    <property type="entry name" value="ATP-DEPENDENT CLP PROTEASE ATP-BINDING SUBUNIT CLPX-LIKE, MITOCHONDRIAL"/>
    <property type="match status" value="1"/>
</dbReference>
<dbReference type="PANTHER" id="PTHR48102">
    <property type="entry name" value="ATP-DEPENDENT CLP PROTEASE ATP-BINDING SUBUNIT CLPX-LIKE, MITOCHONDRIAL-RELATED"/>
    <property type="match status" value="1"/>
</dbReference>
<dbReference type="Pfam" id="PF07724">
    <property type="entry name" value="AAA_2"/>
    <property type="match status" value="1"/>
</dbReference>
<dbReference type="Pfam" id="PF10431">
    <property type="entry name" value="ClpB_D2-small"/>
    <property type="match status" value="1"/>
</dbReference>
<dbReference type="Pfam" id="PF06689">
    <property type="entry name" value="zf-C4_ClpX"/>
    <property type="match status" value="1"/>
</dbReference>
<dbReference type="SMART" id="SM00382">
    <property type="entry name" value="AAA"/>
    <property type="match status" value="1"/>
</dbReference>
<dbReference type="SMART" id="SM01086">
    <property type="entry name" value="ClpB_D2-small"/>
    <property type="match status" value="1"/>
</dbReference>
<dbReference type="SMART" id="SM00994">
    <property type="entry name" value="zf-C4_ClpX"/>
    <property type="match status" value="1"/>
</dbReference>
<dbReference type="SUPFAM" id="SSF57716">
    <property type="entry name" value="Glucocorticoid receptor-like (DNA-binding domain)"/>
    <property type="match status" value="1"/>
</dbReference>
<dbReference type="SUPFAM" id="SSF52540">
    <property type="entry name" value="P-loop containing nucleoside triphosphate hydrolases"/>
    <property type="match status" value="1"/>
</dbReference>
<dbReference type="PROSITE" id="PS51902">
    <property type="entry name" value="CLPX_ZB"/>
    <property type="match status" value="1"/>
</dbReference>
<keyword id="KW-0067">ATP-binding</keyword>
<keyword id="KW-0143">Chaperone</keyword>
<keyword id="KW-0479">Metal-binding</keyword>
<keyword id="KW-0547">Nucleotide-binding</keyword>
<keyword id="KW-0862">Zinc</keyword>
<proteinExistence type="inferred from homology"/>
<organism>
    <name type="scientific">Streptococcus pneumoniae (strain CGSP14)</name>
    <dbReference type="NCBI Taxonomy" id="516950"/>
    <lineage>
        <taxon>Bacteria</taxon>
        <taxon>Bacillati</taxon>
        <taxon>Bacillota</taxon>
        <taxon>Bacilli</taxon>
        <taxon>Lactobacillales</taxon>
        <taxon>Streptococcaceae</taxon>
        <taxon>Streptococcus</taxon>
    </lineage>
</organism>
<sequence length="410" mass="45713">MSTNRKNDMMVYCSFCGKSQEEVQKIIAGNNAFICNECVELAQEIIREELVEEVLADLSEVPKPIELLHILNHYVIGQDRAKRALAVAVYNHYKRINFHDTREESEDVDLQKSNILMIGPTGSGKTFLAQTLAKSLNVPFAIADATALTEAGYVGEDVENILLKLLQAADFNIERAERGIIYVDEIDKIAKKSENVSITRDVSGEGVQQALLKIIEGTVASVPPQGGRKHPQQEMIQVDTKNILFIVGGAFDGIEEIVKQRLGEKVIGFGQNNKAIDENSSYMQEIIAEDIQKFGIIPELIGRLPVFAALEQLTVDDLVRILKEPRNALVKQYQTLLSYDDVELEFDDEALQEIANKAIERKTGARGLRSIIEETMLDVMFEVPSQENVKLVRITKEAVDGTDKPILETA</sequence>